<comment type="function">
    <text evidence="1 2">Pore-forming subunit of Ca(2+) homeostasis modulator channels. Mediates ATP release from astrocytes and ATP-induced Ca(2+) influx in microglia thus regulating neuronal ATP and Ca(2+) homeostasis, synaptic transmission and neuroinflammatory response. May form intercellular gap junctions. The gating mechanism remains unknown.</text>
</comment>
<comment type="catalytic activity">
    <reaction evidence="2">
        <text>ATP(in) = ATP(out)</text>
        <dbReference type="Rhea" id="RHEA:75687"/>
        <dbReference type="ChEBI" id="CHEBI:30616"/>
    </reaction>
    <physiologicalReaction direction="left-to-right" evidence="1">
        <dbReference type="Rhea" id="RHEA:75688"/>
    </physiologicalReaction>
</comment>
<comment type="subunit">
    <text evidence="2">Homo-undecamer. Two undecameric hemichannels can assemble in a head-to-head manner to form a gap junction.</text>
</comment>
<comment type="subcellular location">
    <subcellularLocation>
        <location evidence="1">Cell membrane</location>
        <topology evidence="3">Multi-pass membrane protein</topology>
    </subcellularLocation>
</comment>
<comment type="similarity">
    <text evidence="4">Belongs to the CALHM family.</text>
</comment>
<protein>
    <recommendedName>
        <fullName>Calcium homeostasis modulator protein 2</fullName>
    </recommendedName>
    <alternativeName>
        <fullName>Protein FAM26B</fullName>
    </alternativeName>
</protein>
<organism>
    <name type="scientific">Rattus norvegicus</name>
    <name type="common">Rat</name>
    <dbReference type="NCBI Taxonomy" id="10116"/>
    <lineage>
        <taxon>Eukaryota</taxon>
        <taxon>Metazoa</taxon>
        <taxon>Chordata</taxon>
        <taxon>Craniata</taxon>
        <taxon>Vertebrata</taxon>
        <taxon>Euteleostomi</taxon>
        <taxon>Mammalia</taxon>
        <taxon>Eutheria</taxon>
        <taxon>Euarchontoglires</taxon>
        <taxon>Glires</taxon>
        <taxon>Rodentia</taxon>
        <taxon>Myomorpha</taxon>
        <taxon>Muroidea</taxon>
        <taxon>Muridae</taxon>
        <taxon>Murinae</taxon>
        <taxon>Rattus</taxon>
    </lineage>
</organism>
<evidence type="ECO:0000250" key="1">
    <source>
        <dbReference type="UniProtKB" id="Q8VEC4"/>
    </source>
</evidence>
<evidence type="ECO:0000250" key="2">
    <source>
        <dbReference type="UniProtKB" id="Q9HA72"/>
    </source>
</evidence>
<evidence type="ECO:0000255" key="3"/>
<evidence type="ECO:0000305" key="4"/>
<name>CAHM2_RAT</name>
<reference key="1">
    <citation type="journal article" date="2004" name="Genome Res.">
        <title>The status, quality, and expansion of the NIH full-length cDNA project: the Mammalian Gene Collection (MGC).</title>
        <authorList>
            <consortium name="The MGC Project Team"/>
        </authorList>
    </citation>
    <scope>NUCLEOTIDE SEQUENCE [LARGE SCALE MRNA]</scope>
    <source>
        <tissue>Lung</tissue>
    </source>
</reference>
<sequence length="323" mass="35931">MAALIAENFRFLSLFFKSKDVMIFNGLVALGTVGSQELFSVVAFHCPCSPARNYLYGLTAIGVPALALFLIGVILNNHTWNLVAECQYRRAKNCSAAPTFLLLSSILGRAAVAPVTWSVISLLRGEAYVCALSEFVDPSSLTAGDEGFPPDHATEILARFPCGEGPANLSGFREEVSRRLKYESQLFGWLLIGVVAILVFLTKCFKHYCSPLSYRQEAYWAQYRTNEDQLFQRTAEVHSRVLAANNVRRFFGFVALNKDDEELVTKFPVEGTQPRPQWNAITGVYLYRENQGLPLYSRLHKWAQGLTGNGTAPDNVEMALLTV</sequence>
<gene>
    <name type="primary">Calhm2</name>
    <name type="synonym">Fam26b</name>
</gene>
<keyword id="KW-1003">Cell membrane</keyword>
<keyword id="KW-1015">Disulfide bond</keyword>
<keyword id="KW-0407">Ion channel</keyword>
<keyword id="KW-0406">Ion transport</keyword>
<keyword id="KW-0472">Membrane</keyword>
<keyword id="KW-1185">Reference proteome</keyword>
<keyword id="KW-0812">Transmembrane</keyword>
<keyword id="KW-1133">Transmembrane helix</keyword>
<keyword id="KW-0813">Transport</keyword>
<accession>Q5RJQ8</accession>
<dbReference type="EMBL" id="BC086540">
    <property type="protein sequence ID" value="AAH86540.1"/>
    <property type="molecule type" value="mRNA"/>
</dbReference>
<dbReference type="RefSeq" id="NP_001008307.1">
    <property type="nucleotide sequence ID" value="NM_001008306.1"/>
</dbReference>
<dbReference type="SMR" id="Q5RJQ8"/>
<dbReference type="FunCoup" id="Q5RJQ8">
    <property type="interactions" value="299"/>
</dbReference>
<dbReference type="IntAct" id="Q5RJQ8">
    <property type="interactions" value="1"/>
</dbReference>
<dbReference type="MINT" id="Q5RJQ8"/>
<dbReference type="STRING" id="10116.ENSRNOP00000027526"/>
<dbReference type="PhosphoSitePlus" id="Q5RJQ8"/>
<dbReference type="SwissPalm" id="Q5RJQ8"/>
<dbReference type="PaxDb" id="10116-ENSRNOP00000027526"/>
<dbReference type="Ensembl" id="ENSRNOT00000027526.4">
    <property type="protein sequence ID" value="ENSRNOP00000027526.3"/>
    <property type="gene ID" value="ENSRNOG00000020325.7"/>
</dbReference>
<dbReference type="GeneID" id="294019"/>
<dbReference type="KEGG" id="rno:294019"/>
<dbReference type="AGR" id="RGD:1308276"/>
<dbReference type="CTD" id="51063"/>
<dbReference type="RGD" id="1308276">
    <property type="gene designation" value="Calhm2"/>
</dbReference>
<dbReference type="eggNOG" id="ENOG502QVU7">
    <property type="taxonomic scope" value="Eukaryota"/>
</dbReference>
<dbReference type="GeneTree" id="ENSGT01030000234610"/>
<dbReference type="HOGENOM" id="CLU_069286_1_0_1"/>
<dbReference type="InParanoid" id="Q5RJQ8"/>
<dbReference type="OMA" id="LNTHTWN"/>
<dbReference type="OrthoDB" id="9865653at2759"/>
<dbReference type="PhylomeDB" id="Q5RJQ8"/>
<dbReference type="TreeFam" id="TF329085"/>
<dbReference type="PRO" id="PR:Q5RJQ8"/>
<dbReference type="Proteomes" id="UP000002494">
    <property type="component" value="Chromosome 1"/>
</dbReference>
<dbReference type="Bgee" id="ENSRNOG00000020325">
    <property type="expression patterns" value="Expressed in spleen and 20 other cell types or tissues"/>
</dbReference>
<dbReference type="GO" id="GO:0005886">
    <property type="term" value="C:plasma membrane"/>
    <property type="evidence" value="ECO:0000250"/>
    <property type="project" value="UniProtKB"/>
</dbReference>
<dbReference type="GO" id="GO:0005261">
    <property type="term" value="F:monoatomic cation channel activity"/>
    <property type="evidence" value="ECO:0000318"/>
    <property type="project" value="GO_Central"/>
</dbReference>
<dbReference type="GO" id="GO:1904669">
    <property type="term" value="P:ATP export"/>
    <property type="evidence" value="ECO:0000250"/>
    <property type="project" value="UniProtKB"/>
</dbReference>
<dbReference type="GO" id="GO:0070509">
    <property type="term" value="P:calcium ion import"/>
    <property type="evidence" value="ECO:0000250"/>
    <property type="project" value="UniProtKB"/>
</dbReference>
<dbReference type="GO" id="GO:0043065">
    <property type="term" value="P:positive regulation of apoptotic process"/>
    <property type="evidence" value="ECO:0000250"/>
    <property type="project" value="UniProtKB"/>
</dbReference>
<dbReference type="GO" id="GO:1903978">
    <property type="term" value="P:regulation of microglial cell activation"/>
    <property type="evidence" value="ECO:0000250"/>
    <property type="project" value="UniProtKB"/>
</dbReference>
<dbReference type="GO" id="GO:0048167">
    <property type="term" value="P:regulation of synaptic plasticity"/>
    <property type="evidence" value="ECO:0000250"/>
    <property type="project" value="UniProtKB"/>
</dbReference>
<dbReference type="InterPro" id="IPR029569">
    <property type="entry name" value="CALHM"/>
</dbReference>
<dbReference type="PANTHER" id="PTHR32261">
    <property type="entry name" value="CALCIUM HOMEOSTASIS MODULATOR PROTEIN"/>
    <property type="match status" value="1"/>
</dbReference>
<dbReference type="PANTHER" id="PTHR32261:SF3">
    <property type="entry name" value="CALCIUM HOMEOSTASIS MODULATOR PROTEIN 2"/>
    <property type="match status" value="1"/>
</dbReference>
<dbReference type="Pfam" id="PF14798">
    <property type="entry name" value="Ca_hom_mod"/>
    <property type="match status" value="1"/>
</dbReference>
<feature type="chain" id="PRO_0000186722" description="Calcium homeostasis modulator protein 2">
    <location>
        <begin position="1"/>
        <end position="323"/>
    </location>
</feature>
<feature type="topological domain" description="Cytoplasmic" evidence="4">
    <location>
        <begin position="1"/>
        <end position="21"/>
    </location>
</feature>
<feature type="transmembrane region" description="Helical; Name=S1" evidence="2">
    <location>
        <begin position="22"/>
        <end position="43"/>
    </location>
</feature>
<feature type="topological domain" description="Extracellular" evidence="4">
    <location>
        <begin position="44"/>
        <end position="52"/>
    </location>
</feature>
<feature type="transmembrane region" description="Helical; Name=S2" evidence="2">
    <location>
        <begin position="53"/>
        <end position="76"/>
    </location>
</feature>
<feature type="topological domain" description="Cytoplasmic" evidence="4">
    <location>
        <begin position="77"/>
        <end position="101"/>
    </location>
</feature>
<feature type="transmembrane region" description="Helical; Name=S3" evidence="2">
    <location>
        <begin position="102"/>
        <end position="132"/>
    </location>
</feature>
<feature type="topological domain" description="Extracellular" evidence="4">
    <location>
        <begin position="133"/>
        <end position="179"/>
    </location>
</feature>
<feature type="transmembrane region" description="Helical; Name=S4" evidence="2">
    <location>
        <begin position="180"/>
        <end position="206"/>
    </location>
</feature>
<feature type="topological domain" description="Cytoplasmic" evidence="4">
    <location>
        <begin position="207"/>
        <end position="323"/>
    </location>
</feature>
<feature type="region of interest" description="Central pore" evidence="2">
    <location>
        <begin position="14"/>
        <end position="39"/>
    </location>
</feature>
<feature type="region of interest" description="Hemichannel docking" evidence="2">
    <location>
        <begin position="145"/>
        <end position="152"/>
    </location>
</feature>
<feature type="region of interest" description="Intersubunit interaction" evidence="2">
    <location>
        <begin position="214"/>
        <end position="251"/>
    </location>
</feature>
<feature type="site" description="Not N-glycosylated" evidence="2">
    <location>
        <position position="168"/>
    </location>
</feature>
<feature type="disulfide bond" evidence="2">
    <location>
        <begin position="46"/>
        <end position="130"/>
    </location>
</feature>
<feature type="disulfide bond" evidence="2">
    <location>
        <begin position="48"/>
        <end position="162"/>
    </location>
</feature>
<proteinExistence type="evidence at transcript level"/>